<name>MFS4B_DANRE</name>
<sequence length="594" mass="64081">MSPAEAAPRKKHVRFARMEGDVDHDDQEENTLFDKQKDVKEGLKSVLKGGKGILSQGSGQVDVVRPGRSKTGTCWRWLVSLALCASFLGLGMAISVLGPTFEDLAINVNKNISNLSYIFVGRASGYIGGSLLGGILFDFVNPHLLLGFALLTTAFGMSGTPFCKKAWVLTVLMSSVGVSMGVLDTGGNVLILNTWGEQAGPHMQALHFSFAAGAFASPIIAKLLFGHHNSSTNTSLMSGHASKTIDAVLPFSHPKGTSTIDLPWMWAYIVIGAFVLLVSLLFFSLYFCISTNSNRTKTASGKQQFSKHHNTLIILLSMFFFFYVGSEVAYGSFIFTYGKDYVHMEETEAAGLNSLFWGAFAAGRGLAIFFAACLHPGTLILLSLVGTTVSSLLLCLFSQNYPMLWACTALYGISMSTTFPSGISWVEQYTTVTGRSAAIFVVGAALGEMVLPALLGFLLGHVQNYPLLMYLTLCTATFTSILFPVLYKLASPEGNVTLRKSSGKCTIKDADDSEYRQALLENMEEQEENESEADLCNDADFEVIEMDDASLLSSPKSSPPADVAASVPDVHLVASPLSEPNMLSFSTDSPRSKL</sequence>
<reference key="1">
    <citation type="submission" date="2007-03" db="EMBL/GenBank/DDBJ databases">
        <authorList>
            <consortium name="NIH - Zebrafish Gene Collection (ZGC) project"/>
        </authorList>
    </citation>
    <scope>NUCLEOTIDE SEQUENCE [LARGE SCALE MRNA]</scope>
    <source>
        <strain>WIK</strain>
        <tissue>Ovary</tissue>
    </source>
</reference>
<accession>A4QN56</accession>
<proteinExistence type="evidence at transcript level"/>
<protein>
    <recommendedName>
        <fullName evidence="2">Sodium-dependent glucose transporter 1</fullName>
    </recommendedName>
    <alternativeName>
        <fullName>Major facilitator superfamily domain-containing protein 4B</fullName>
    </alternativeName>
</protein>
<keyword id="KW-1003">Cell membrane</keyword>
<keyword id="KW-0406">Ion transport</keyword>
<keyword id="KW-0472">Membrane</keyword>
<keyword id="KW-1185">Reference proteome</keyword>
<keyword id="KW-0915">Sodium</keyword>
<keyword id="KW-0739">Sodium transport</keyword>
<keyword id="KW-0762">Sugar transport</keyword>
<keyword id="KW-0769">Symport</keyword>
<keyword id="KW-0812">Transmembrane</keyword>
<keyword id="KW-1133">Transmembrane helix</keyword>
<keyword id="KW-0813">Transport</keyword>
<gene>
    <name type="primary">mfsd4b</name>
    <name type="synonym">naglt1</name>
    <name type="ORF">zgc:162161</name>
</gene>
<comment type="function">
    <text evidence="2">May function as a sodium-dependent glucose transporter. Potential channels for urea in the inner medulla of kidney.</text>
</comment>
<comment type="subcellular location">
    <subcellularLocation>
        <location evidence="2">Apical cell membrane</location>
        <topology evidence="1">Multi-pass membrane protein</topology>
    </subcellularLocation>
</comment>
<comment type="similarity">
    <text evidence="4">Belongs to the major facilitator superfamily.</text>
</comment>
<evidence type="ECO:0000250" key="1"/>
<evidence type="ECO:0000250" key="2">
    <source>
        <dbReference type="UniProtKB" id="Q80T22"/>
    </source>
</evidence>
<evidence type="ECO:0000255" key="3"/>
<evidence type="ECO:0000305" key="4"/>
<feature type="chain" id="PRO_0000294515" description="Sodium-dependent glucose transporter 1">
    <location>
        <begin position="1"/>
        <end position="594"/>
    </location>
</feature>
<feature type="transmembrane region" description="Helical" evidence="3">
    <location>
        <begin position="77"/>
        <end position="97"/>
    </location>
</feature>
<feature type="transmembrane region" description="Helical" evidence="3">
    <location>
        <begin position="115"/>
        <end position="137"/>
    </location>
</feature>
<feature type="transmembrane region" description="Helical" evidence="3">
    <location>
        <begin position="144"/>
        <end position="161"/>
    </location>
</feature>
<feature type="transmembrane region" description="Helical" evidence="3">
    <location>
        <begin position="166"/>
        <end position="186"/>
    </location>
</feature>
<feature type="transmembrane region" description="Helical" evidence="3">
    <location>
        <begin position="205"/>
        <end position="225"/>
    </location>
</feature>
<feature type="transmembrane region" description="Helical" evidence="3">
    <location>
        <begin position="269"/>
        <end position="289"/>
    </location>
</feature>
<feature type="transmembrane region" description="Helical" evidence="3">
    <location>
        <begin position="311"/>
        <end position="331"/>
    </location>
</feature>
<feature type="transmembrane region" description="Helical" evidence="3">
    <location>
        <begin position="349"/>
        <end position="371"/>
    </location>
</feature>
<feature type="transmembrane region" description="Helical" evidence="3">
    <location>
        <begin position="393"/>
        <end position="413"/>
    </location>
</feature>
<feature type="transmembrane region" description="Helical" evidence="3">
    <location>
        <begin position="439"/>
        <end position="459"/>
    </location>
</feature>
<feature type="transmembrane region" description="Helical" evidence="3">
    <location>
        <begin position="467"/>
        <end position="487"/>
    </location>
</feature>
<dbReference type="EMBL" id="BC134911">
    <property type="protein sequence ID" value="AAI34912.1"/>
    <property type="molecule type" value="mRNA"/>
</dbReference>
<dbReference type="RefSeq" id="NP_001082989.1">
    <property type="nucleotide sequence ID" value="NM_001089520.1"/>
</dbReference>
<dbReference type="SMR" id="A4QN56"/>
<dbReference type="FunCoup" id="A4QN56">
    <property type="interactions" value="30"/>
</dbReference>
<dbReference type="STRING" id="7955.ENSDARP00000101496"/>
<dbReference type="PaxDb" id="7955-ENSDARP00000101496"/>
<dbReference type="GeneID" id="100037368"/>
<dbReference type="KEGG" id="dre:100037368"/>
<dbReference type="AGR" id="ZFIN:ZDB-GENE-070410-26"/>
<dbReference type="CTD" id="91749"/>
<dbReference type="ZFIN" id="ZDB-GENE-070410-26">
    <property type="gene designation" value="mfsd4b"/>
</dbReference>
<dbReference type="eggNOG" id="ENOG502R5UW">
    <property type="taxonomic scope" value="Eukaryota"/>
</dbReference>
<dbReference type="InParanoid" id="A4QN56"/>
<dbReference type="OrthoDB" id="546893at2759"/>
<dbReference type="PhylomeDB" id="A4QN56"/>
<dbReference type="Reactome" id="R-DRE-189200">
    <property type="pathway name" value="Cellular hexose transport"/>
</dbReference>
<dbReference type="PRO" id="PR:A4QN56"/>
<dbReference type="Proteomes" id="UP000000437">
    <property type="component" value="Chromosome 20"/>
</dbReference>
<dbReference type="GO" id="GO:0016324">
    <property type="term" value="C:apical plasma membrane"/>
    <property type="evidence" value="ECO:0007669"/>
    <property type="project" value="UniProtKB-SubCell"/>
</dbReference>
<dbReference type="GO" id="GO:0015293">
    <property type="term" value="F:symporter activity"/>
    <property type="evidence" value="ECO:0007669"/>
    <property type="project" value="UniProtKB-KW"/>
</dbReference>
<dbReference type="GO" id="GO:0006814">
    <property type="term" value="P:sodium ion transport"/>
    <property type="evidence" value="ECO:0007669"/>
    <property type="project" value="UniProtKB-KW"/>
</dbReference>
<dbReference type="CDD" id="cd17454">
    <property type="entry name" value="MFS_NaGLT1_MFSD4B"/>
    <property type="match status" value="1"/>
</dbReference>
<dbReference type="FunFam" id="1.20.1250.20:FF:001175">
    <property type="entry name" value="Sodium-dependent glucose transporter 1"/>
    <property type="match status" value="1"/>
</dbReference>
<dbReference type="Gene3D" id="1.20.1250.20">
    <property type="entry name" value="MFS general substrate transporter like domains"/>
    <property type="match status" value="2"/>
</dbReference>
<dbReference type="InterPro" id="IPR011701">
    <property type="entry name" value="MFS"/>
</dbReference>
<dbReference type="InterPro" id="IPR036259">
    <property type="entry name" value="MFS_trans_sf"/>
</dbReference>
<dbReference type="PANTHER" id="PTHR23121">
    <property type="entry name" value="SODIUM-DEPENDENT GLUCOSE TRANSPORTER 1"/>
    <property type="match status" value="1"/>
</dbReference>
<dbReference type="PANTHER" id="PTHR23121:SF9">
    <property type="entry name" value="SODIUM-DEPENDENT GLUCOSE TRANSPORTER 1"/>
    <property type="match status" value="1"/>
</dbReference>
<dbReference type="Pfam" id="PF07690">
    <property type="entry name" value="MFS_1"/>
    <property type="match status" value="1"/>
</dbReference>
<dbReference type="SUPFAM" id="SSF103473">
    <property type="entry name" value="MFS general substrate transporter"/>
    <property type="match status" value="1"/>
</dbReference>
<organism>
    <name type="scientific">Danio rerio</name>
    <name type="common">Zebrafish</name>
    <name type="synonym">Brachydanio rerio</name>
    <dbReference type="NCBI Taxonomy" id="7955"/>
    <lineage>
        <taxon>Eukaryota</taxon>
        <taxon>Metazoa</taxon>
        <taxon>Chordata</taxon>
        <taxon>Craniata</taxon>
        <taxon>Vertebrata</taxon>
        <taxon>Euteleostomi</taxon>
        <taxon>Actinopterygii</taxon>
        <taxon>Neopterygii</taxon>
        <taxon>Teleostei</taxon>
        <taxon>Ostariophysi</taxon>
        <taxon>Cypriniformes</taxon>
        <taxon>Danionidae</taxon>
        <taxon>Danioninae</taxon>
        <taxon>Danio</taxon>
    </lineage>
</organism>